<dbReference type="EMBL" id="AP009048">
    <property type="protein sequence ID" value="BAA16334.1"/>
    <property type="molecule type" value="Genomic_DNA"/>
</dbReference>
<dbReference type="EMBL" id="U00096">
    <property type="protein sequence ID" value="AAC75509.1"/>
    <property type="molecule type" value="Genomic_DNA"/>
</dbReference>
<dbReference type="PIR" id="G65020">
    <property type="entry name" value="G65020"/>
</dbReference>
<dbReference type="RefSeq" id="NP_416951.1">
    <property type="nucleotide sequence ID" value="NC_000913.3"/>
</dbReference>
<dbReference type="RefSeq" id="WP_000762196.1">
    <property type="nucleotide sequence ID" value="NZ_STEB01000051.1"/>
</dbReference>
<dbReference type="PDB" id="2HD3">
    <property type="method" value="X-ray"/>
    <property type="resolution" value="2.40 A"/>
    <property type="chains" value="A/B/C/D/E/F/G/H/I/J/K/L=1-95"/>
</dbReference>
<dbReference type="PDB" id="2Z9H">
    <property type="method" value="X-ray"/>
    <property type="resolution" value="2.71 A"/>
    <property type="chains" value="A/B/C/D/E/F=1-95"/>
</dbReference>
<dbReference type="PDBsum" id="2HD3"/>
<dbReference type="PDBsum" id="2Z9H"/>
<dbReference type="SMR" id="P0AEJ8"/>
<dbReference type="BioGRID" id="4260582">
    <property type="interactions" value="12"/>
</dbReference>
<dbReference type="BioGRID" id="851284">
    <property type="interactions" value="12"/>
</dbReference>
<dbReference type="FunCoup" id="P0AEJ8">
    <property type="interactions" value="224"/>
</dbReference>
<dbReference type="IntAct" id="P0AEJ8">
    <property type="interactions" value="13"/>
</dbReference>
<dbReference type="STRING" id="511145.b2456"/>
<dbReference type="PaxDb" id="511145-b2456"/>
<dbReference type="EnsemblBacteria" id="AAC75509">
    <property type="protein sequence ID" value="AAC75509"/>
    <property type="gene ID" value="b2456"/>
</dbReference>
<dbReference type="GeneID" id="93774684"/>
<dbReference type="GeneID" id="946945"/>
<dbReference type="KEGG" id="ecj:JW2440"/>
<dbReference type="KEGG" id="eco:b2456"/>
<dbReference type="KEGG" id="ecoc:C3026_13630"/>
<dbReference type="PATRIC" id="fig|1411691.4.peg.4284"/>
<dbReference type="EchoBASE" id="EB3938"/>
<dbReference type="eggNOG" id="COG4576">
    <property type="taxonomic scope" value="Bacteria"/>
</dbReference>
<dbReference type="HOGENOM" id="CLU_148498_0_0_6"/>
<dbReference type="InParanoid" id="P0AEJ8"/>
<dbReference type="OMA" id="GAGINEW"/>
<dbReference type="OrthoDB" id="196195at2"/>
<dbReference type="PhylomeDB" id="P0AEJ8"/>
<dbReference type="BioCyc" id="EcoCyc:G7286-MONOMER"/>
<dbReference type="UniPathway" id="UPA00560"/>
<dbReference type="EvolutionaryTrace" id="P0AEJ8"/>
<dbReference type="PRO" id="PR:P0AEJ8"/>
<dbReference type="Proteomes" id="UP000000625">
    <property type="component" value="Chromosome"/>
</dbReference>
<dbReference type="GO" id="GO:0031469">
    <property type="term" value="C:bacterial microcompartment"/>
    <property type="evidence" value="ECO:0007669"/>
    <property type="project" value="UniProtKB-SubCell"/>
</dbReference>
<dbReference type="GO" id="GO:0042802">
    <property type="term" value="F:identical protein binding"/>
    <property type="evidence" value="ECO:0000314"/>
    <property type="project" value="EcoCyc"/>
</dbReference>
<dbReference type="GO" id="GO:0006974">
    <property type="term" value="P:DNA damage response"/>
    <property type="evidence" value="ECO:0000270"/>
    <property type="project" value="EcoliWiki"/>
</dbReference>
<dbReference type="GO" id="GO:0046336">
    <property type="term" value="P:ethanolamine catabolic process"/>
    <property type="evidence" value="ECO:0007669"/>
    <property type="project" value="UniProtKB-UniPathway"/>
</dbReference>
<dbReference type="GO" id="GO:0034214">
    <property type="term" value="P:protein hexamerization"/>
    <property type="evidence" value="ECO:0000314"/>
    <property type="project" value="EcoCyc"/>
</dbReference>
<dbReference type="CDD" id="cd01614">
    <property type="entry name" value="EutN_CcmL"/>
    <property type="match status" value="1"/>
</dbReference>
<dbReference type="FunFam" id="2.40.50.220:FF:000001">
    <property type="entry name" value="Ethanolamine utilization microcompartment protein EutN"/>
    <property type="match status" value="1"/>
</dbReference>
<dbReference type="Gene3D" id="2.40.50.220">
    <property type="entry name" value="EutN/Ccml"/>
    <property type="match status" value="1"/>
</dbReference>
<dbReference type="InterPro" id="IPR004992">
    <property type="entry name" value="EutN_CcmL"/>
</dbReference>
<dbReference type="InterPro" id="IPR036677">
    <property type="entry name" value="EutN_CcmL_sf"/>
</dbReference>
<dbReference type="NCBIfam" id="NF011992">
    <property type="entry name" value="PRK15448.1"/>
    <property type="match status" value="1"/>
</dbReference>
<dbReference type="PANTHER" id="PTHR36539:SF1">
    <property type="entry name" value="BACTERIAL MICROCOMPARTMENT SHELL VERTEX PROTEIN EUTN"/>
    <property type="match status" value="1"/>
</dbReference>
<dbReference type="PANTHER" id="PTHR36539">
    <property type="entry name" value="ETHANOLAMINE UTILIZATION PROTEIN EUTN"/>
    <property type="match status" value="1"/>
</dbReference>
<dbReference type="Pfam" id="PF03319">
    <property type="entry name" value="EutN_CcmL"/>
    <property type="match status" value="1"/>
</dbReference>
<dbReference type="SUPFAM" id="SSF159133">
    <property type="entry name" value="EutN/CcmL-like"/>
    <property type="match status" value="1"/>
</dbReference>
<dbReference type="PROSITE" id="PS51932">
    <property type="entry name" value="BMV"/>
    <property type="match status" value="1"/>
</dbReference>
<keyword id="KW-0002">3D-structure</keyword>
<keyword id="KW-1283">Bacterial microcompartment</keyword>
<keyword id="KW-1185">Reference proteome</keyword>
<comment type="function">
    <text evidence="7 9">Probably forms vertices in the bacterial microcompartment (BMC) dedicated to ethanolamine degradation (Probable). It may be involved in transporting positively charged molecules into and out of the BMC (Probable).</text>
</comment>
<comment type="pathway">
    <text>Amine and polyamine degradation; ethanolamine degradation.</text>
</comment>
<comment type="subunit">
    <text evidence="2 3 4">Has been crystallized as a homohexamer with an acidic central pore with a diameter of 26 Angstroms on one side and 14 Angstroms on the other (PubMed:17588214, PubMed:18292340). In solution has been shown to be a pentamer (PubMed:23456886).</text>
</comment>
<comment type="interaction">
    <interactant intactId="EBI-8767793">
        <id>P0AEJ8</id>
    </interactant>
    <interactant intactId="EBI-554060">
        <id>P18196</id>
        <label>minC</label>
    </interactant>
    <organismsDiffer>false</organismsDiffer>
    <experiments>3</experiments>
</comment>
<comment type="subcellular location">
    <subcellularLocation>
        <location evidence="7 8">Bacterial microcompartment</location>
    </subcellularLocation>
</comment>
<comment type="similarity">
    <text evidence="6">Belongs to the CcmL/EutN family.</text>
</comment>
<comment type="caution">
    <text evidence="10">In strain MG1655 the eut operon is interrupted by the CPZ-55 prophage, encoding 9 genes situated between eutA and eutB, which are translated in the other direction. CPZ-55 may prevent expression of the eut operon in strain MG1655. Strain W3110 does not have this prophage element and should be able to express the operon.</text>
</comment>
<feature type="chain" id="PRO_0000087091" description="Bacterial microcompartment shell vertex protein EutN">
    <location>
        <begin position="1"/>
        <end position="95"/>
    </location>
</feature>
<feature type="domain" description="BMV" evidence="1">
    <location>
        <begin position="1"/>
        <end position="83"/>
    </location>
</feature>
<feature type="strand" evidence="13">
    <location>
        <begin position="2"/>
        <end position="11"/>
    </location>
</feature>
<feature type="strand" evidence="13">
    <location>
        <begin position="13"/>
        <end position="15"/>
    </location>
</feature>
<feature type="helix" evidence="13">
    <location>
        <begin position="17"/>
        <end position="19"/>
    </location>
</feature>
<feature type="strand" evidence="13">
    <location>
        <begin position="23"/>
        <end position="30"/>
    </location>
</feature>
<feature type="strand" evidence="13">
    <location>
        <begin position="36"/>
        <end position="47"/>
    </location>
</feature>
<feature type="strand" evidence="13">
    <location>
        <begin position="54"/>
        <end position="59"/>
    </location>
</feature>
<feature type="helix" evidence="13">
    <location>
        <begin position="60"/>
        <end position="67"/>
    </location>
</feature>
<feature type="strand" evidence="13">
    <location>
        <begin position="75"/>
        <end position="81"/>
    </location>
</feature>
<feature type="strand" evidence="13">
    <location>
        <begin position="83"/>
        <end position="89"/>
    </location>
</feature>
<feature type="strand" evidence="13">
    <location>
        <begin position="91"/>
        <end position="94"/>
    </location>
</feature>
<gene>
    <name type="primary">eutN</name>
    <name type="synonym">cchB</name>
    <name type="synonym">yffY</name>
    <name type="ordered locus">b2456</name>
    <name type="ordered locus">JW2440</name>
</gene>
<organism>
    <name type="scientific">Escherichia coli (strain K12)</name>
    <dbReference type="NCBI Taxonomy" id="83333"/>
    <lineage>
        <taxon>Bacteria</taxon>
        <taxon>Pseudomonadati</taxon>
        <taxon>Pseudomonadota</taxon>
        <taxon>Gammaproteobacteria</taxon>
        <taxon>Enterobacterales</taxon>
        <taxon>Enterobacteriaceae</taxon>
        <taxon>Escherichia</taxon>
    </lineage>
</organism>
<reference key="1">
    <citation type="journal article" date="1997" name="DNA Res.">
        <title>Construction of a contiguous 874-kb sequence of the Escherichia coli-K12 genome corresponding to 50.0-68.8 min on the linkage map and analysis of its sequence features.</title>
        <authorList>
            <person name="Yamamoto Y."/>
            <person name="Aiba H."/>
            <person name="Baba T."/>
            <person name="Hayashi K."/>
            <person name="Inada T."/>
            <person name="Isono K."/>
            <person name="Itoh T."/>
            <person name="Kimura S."/>
            <person name="Kitagawa M."/>
            <person name="Makino K."/>
            <person name="Miki T."/>
            <person name="Mitsuhashi N."/>
            <person name="Mizobuchi K."/>
            <person name="Mori H."/>
            <person name="Nakade S."/>
            <person name="Nakamura Y."/>
            <person name="Nashimoto H."/>
            <person name="Oshima T."/>
            <person name="Oyama S."/>
            <person name="Saito N."/>
            <person name="Sampei G."/>
            <person name="Satoh Y."/>
            <person name="Sivasundaram S."/>
            <person name="Tagami H."/>
            <person name="Takahashi H."/>
            <person name="Takeda J."/>
            <person name="Takemoto K."/>
            <person name="Uehara K."/>
            <person name="Wada C."/>
            <person name="Yamagata S."/>
            <person name="Horiuchi T."/>
        </authorList>
    </citation>
    <scope>NUCLEOTIDE SEQUENCE [LARGE SCALE GENOMIC DNA]</scope>
    <source>
        <strain>K12 / W3110 / ATCC 27325 / DSM 5911</strain>
    </source>
</reference>
<reference key="2">
    <citation type="journal article" date="1997" name="Science">
        <title>The complete genome sequence of Escherichia coli K-12.</title>
        <authorList>
            <person name="Blattner F.R."/>
            <person name="Plunkett G. III"/>
            <person name="Bloch C.A."/>
            <person name="Perna N.T."/>
            <person name="Burland V."/>
            <person name="Riley M."/>
            <person name="Collado-Vides J."/>
            <person name="Glasner J.D."/>
            <person name="Rode C.K."/>
            <person name="Mayhew G.F."/>
            <person name="Gregor J."/>
            <person name="Davis N.W."/>
            <person name="Kirkpatrick H.A."/>
            <person name="Goeden M.A."/>
            <person name="Rose D.J."/>
            <person name="Mau B."/>
            <person name="Shao Y."/>
        </authorList>
    </citation>
    <scope>NUCLEOTIDE SEQUENCE [LARGE SCALE GENOMIC DNA]</scope>
    <source>
        <strain>K12 / MG1655 / ATCC 47076</strain>
    </source>
</reference>
<reference key="3">
    <citation type="journal article" date="2006" name="Mol. Syst. Biol.">
        <title>Highly accurate genome sequences of Escherichia coli K-12 strains MG1655 and W3110.</title>
        <authorList>
            <person name="Hayashi K."/>
            <person name="Morooka N."/>
            <person name="Yamamoto Y."/>
            <person name="Fujita K."/>
            <person name="Isono K."/>
            <person name="Choi S."/>
            <person name="Ohtsubo E."/>
            <person name="Baba T."/>
            <person name="Wanner B.L."/>
            <person name="Mori H."/>
            <person name="Horiuchi T."/>
        </authorList>
    </citation>
    <scope>NUCLEOTIDE SEQUENCE [LARGE SCALE GENOMIC DNA]</scope>
    <source>
        <strain>K12 / W3110 / ATCC 27325 / DSM 5911</strain>
    </source>
</reference>
<reference key="4">
    <citation type="journal article" date="2013" name="Protein Sci.">
        <title>Bacterial microcompartment shells of diverse functional types possess pentameric vertex proteins.</title>
        <authorList>
            <person name="Wheatley N.M."/>
            <person name="Gidaniyan S.D."/>
            <person name="Liu Y."/>
            <person name="Cascio D."/>
            <person name="Yeates T.O."/>
        </authorList>
    </citation>
    <scope>SUBUNIT</scope>
</reference>
<reference evidence="11" key="5">
    <citation type="journal article" date="2007" name="J. Struct. Funct. Genomics">
        <title>Functional insights from structural genomics.</title>
        <authorList>
            <person name="Forouhar F."/>
            <person name="Kuzin A."/>
            <person name="Seetharaman J."/>
            <person name="Lee I."/>
            <person name="Zhou W."/>
            <person name="Abashidze M."/>
            <person name="Chen Y."/>
            <person name="Yong W."/>
            <person name="Janjua H."/>
            <person name="Fang Y."/>
            <person name="Wang D."/>
            <person name="Cunningham K."/>
            <person name="Xiao R."/>
            <person name="Acton T.B."/>
            <person name="Pichersky E."/>
            <person name="Klessig D.F."/>
            <person name="Porter C.W."/>
            <person name="Montelione G.T."/>
            <person name="Tong L."/>
        </authorList>
    </citation>
    <scope>X-RAY CRYSTALLOGRAPHY (2.40 ANGSTROMS)</scope>
    <scope>FUNCTION</scope>
    <scope>SUBUNIT</scope>
    <scope>SUBCELLULAR LOCATION</scope>
    <source>
        <strain>K12 / W3110 / ATCC 27325 / DSM 5911</strain>
    </source>
</reference>
<reference evidence="12" key="6">
    <citation type="journal article" date="2008" name="Science">
        <title>Atomic-level models of the bacterial carboxysome shell.</title>
        <authorList>
            <person name="Tanaka S."/>
            <person name="Kerfeld C.A."/>
            <person name="Sawaya M.R."/>
            <person name="Cai F."/>
            <person name="Heinhorst S."/>
            <person name="Cannon G.C."/>
            <person name="Yeates T.O."/>
        </authorList>
    </citation>
    <scope>X-RAY CRYSTALLOGRAPHY (2.71 ANGSTROMS)</scope>
    <scope>SUBUNIT</scope>
    <scope>SUBCELLULAR LOCATION</scope>
</reference>
<accession>P0AEJ8</accession>
<accession>P77633</accession>
<protein>
    <recommendedName>
        <fullName evidence="5">Bacterial microcompartment shell vertex protein EutN</fullName>
    </recommendedName>
    <alternativeName>
        <fullName evidence="6">Ethanolamine catabolic microcompartment shell protein EutN</fullName>
    </alternativeName>
    <alternativeName>
        <fullName>Ethanolamine utilization protein EutN</fullName>
    </alternativeName>
</protein>
<evidence type="ECO:0000255" key="1">
    <source>
        <dbReference type="PROSITE-ProRule" id="PRU01280"/>
    </source>
</evidence>
<evidence type="ECO:0000269" key="2">
    <source>
    </source>
</evidence>
<evidence type="ECO:0000269" key="3">
    <source>
    </source>
</evidence>
<evidence type="ECO:0000269" key="4">
    <source>
    </source>
</evidence>
<evidence type="ECO:0000303" key="5">
    <source>
    </source>
</evidence>
<evidence type="ECO:0000305" key="6"/>
<evidence type="ECO:0000305" key="7">
    <source>
    </source>
</evidence>
<evidence type="ECO:0000305" key="8">
    <source>
    </source>
</evidence>
<evidence type="ECO:0000305" key="9">
    <source>
    </source>
</evidence>
<evidence type="ECO:0000305" key="10">
    <source>
    </source>
</evidence>
<evidence type="ECO:0007744" key="11">
    <source>
        <dbReference type="PDB" id="2HD3"/>
    </source>
</evidence>
<evidence type="ECO:0007744" key="12">
    <source>
        <dbReference type="PDB" id="2Z9H"/>
    </source>
</evidence>
<evidence type="ECO:0007829" key="13">
    <source>
        <dbReference type="PDB" id="2Z9H"/>
    </source>
</evidence>
<name>EUTN_ECOLI</name>
<sequence>MKLAVVTGQIVCTVRHHGLAHDKLLMVEMIDPQGNPDGQCAVAIDNIGAGTGEWVLLVSGSSARQAHKSETSPVDLCVIGIVDEVVSGGQVIFHK</sequence>
<proteinExistence type="evidence at protein level"/>